<comment type="function">
    <text evidence="1">Catalyzes the isomerization between 2-isopropylmalate and 3-isopropylmalate, via the formation of 2-isopropylmaleate.</text>
</comment>
<comment type="catalytic activity">
    <reaction evidence="1">
        <text>(2R,3S)-3-isopropylmalate = (2S)-2-isopropylmalate</text>
        <dbReference type="Rhea" id="RHEA:32287"/>
        <dbReference type="ChEBI" id="CHEBI:1178"/>
        <dbReference type="ChEBI" id="CHEBI:35121"/>
        <dbReference type="EC" id="4.2.1.33"/>
    </reaction>
</comment>
<comment type="cofactor">
    <cofactor evidence="1">
        <name>[4Fe-4S] cluster</name>
        <dbReference type="ChEBI" id="CHEBI:49883"/>
    </cofactor>
    <text evidence="1">Binds 1 [4Fe-4S] cluster per subunit.</text>
</comment>
<comment type="pathway">
    <text evidence="1">Amino-acid biosynthesis; L-leucine biosynthesis; L-leucine from 3-methyl-2-oxobutanoate: step 2/4.</text>
</comment>
<comment type="subunit">
    <text evidence="1">Heterodimer of LeuC and LeuD.</text>
</comment>
<comment type="similarity">
    <text evidence="1">Belongs to the aconitase/IPM isomerase family. LeuC type 2 subfamily.</text>
</comment>
<reference key="1">
    <citation type="journal article" date="2009" name="PLoS Genet.">
        <title>Adaptations to submarine hydrothermal environments exemplified by the genome of Nautilia profundicola.</title>
        <authorList>
            <person name="Campbell B.J."/>
            <person name="Smith J.L."/>
            <person name="Hanson T.E."/>
            <person name="Klotz M.G."/>
            <person name="Stein L.Y."/>
            <person name="Lee C.K."/>
            <person name="Wu D."/>
            <person name="Robinson J.M."/>
            <person name="Khouri H.M."/>
            <person name="Eisen J.A."/>
            <person name="Cary S.C."/>
        </authorList>
    </citation>
    <scope>NUCLEOTIDE SEQUENCE [LARGE SCALE GENOMIC DNA]</scope>
    <source>
        <strain>ATCC BAA-1463 / DSM 18972 / AmH</strain>
    </source>
</reference>
<sequence length="425" mass="46454">MPMTITEKIFAEHIGREVKPGEIIMCDVDMTIGNDITTPISIRAFNESGAEKLAKPDNFAIVLDHFIPPKDIASANQAKINRDFAYKHDLKNFFDEKDMGIEHRLLPEKGLVIPGDVIIGADSHTCTHGALGAFSTGMGSTDIAFCMITGKSWFKIPESIKVVFKGERGEHVYGKDLILELIRRIGVDGALYKALEFTGEVIENLPMDDRMSLCNMAIEAGAKNGIVAYDKITEAFLEEVKKYNPLRSEPKIHYSDPDANYSQVIEIDVNKLEPLVAYPFLPSNGKPISQAVKDDIEIDQVYIGSCTNGTLSDLRIAAEILKGKRVHRRVRLIVTPATQRIYKQAEHEGILDILIDAGAVVANPTCGACLGGYMGILGDGERAVATTNRNFRGRMGSRSSEVYLSNSAVAAASAIAGKIADPRDL</sequence>
<feature type="chain" id="PRO_1000149380" description="3-isopropylmalate dehydratase large subunit">
    <location>
        <begin position="1"/>
        <end position="425"/>
    </location>
</feature>
<feature type="binding site" evidence="1">
    <location>
        <position position="306"/>
    </location>
    <ligand>
        <name>[4Fe-4S] cluster</name>
        <dbReference type="ChEBI" id="CHEBI:49883"/>
    </ligand>
</feature>
<feature type="binding site" evidence="1">
    <location>
        <position position="366"/>
    </location>
    <ligand>
        <name>[4Fe-4S] cluster</name>
        <dbReference type="ChEBI" id="CHEBI:49883"/>
    </ligand>
</feature>
<feature type="binding site" evidence="1">
    <location>
        <position position="369"/>
    </location>
    <ligand>
        <name>[4Fe-4S] cluster</name>
        <dbReference type="ChEBI" id="CHEBI:49883"/>
    </ligand>
</feature>
<keyword id="KW-0004">4Fe-4S</keyword>
<keyword id="KW-0028">Amino-acid biosynthesis</keyword>
<keyword id="KW-0100">Branched-chain amino acid biosynthesis</keyword>
<keyword id="KW-0408">Iron</keyword>
<keyword id="KW-0411">Iron-sulfur</keyword>
<keyword id="KW-0432">Leucine biosynthesis</keyword>
<keyword id="KW-0456">Lyase</keyword>
<keyword id="KW-0479">Metal-binding</keyword>
<dbReference type="EC" id="4.2.1.33" evidence="1"/>
<dbReference type="EMBL" id="CP001279">
    <property type="protein sequence ID" value="ACM92883.1"/>
    <property type="molecule type" value="Genomic_DNA"/>
</dbReference>
<dbReference type="RefSeq" id="WP_015901935.1">
    <property type="nucleotide sequence ID" value="NC_012115.1"/>
</dbReference>
<dbReference type="SMR" id="B9L6Y8"/>
<dbReference type="STRING" id="598659.NAMH_1751"/>
<dbReference type="KEGG" id="nam:NAMH_1751"/>
<dbReference type="eggNOG" id="COG0065">
    <property type="taxonomic scope" value="Bacteria"/>
</dbReference>
<dbReference type="HOGENOM" id="CLU_006714_3_4_7"/>
<dbReference type="OrthoDB" id="9764318at2"/>
<dbReference type="UniPathway" id="UPA00048">
    <property type="reaction ID" value="UER00071"/>
</dbReference>
<dbReference type="Proteomes" id="UP000000448">
    <property type="component" value="Chromosome"/>
</dbReference>
<dbReference type="GO" id="GO:0003861">
    <property type="term" value="F:3-isopropylmalate dehydratase activity"/>
    <property type="evidence" value="ECO:0007669"/>
    <property type="project" value="UniProtKB-UniRule"/>
</dbReference>
<dbReference type="GO" id="GO:0051539">
    <property type="term" value="F:4 iron, 4 sulfur cluster binding"/>
    <property type="evidence" value="ECO:0007669"/>
    <property type="project" value="UniProtKB-KW"/>
</dbReference>
<dbReference type="GO" id="GO:0046872">
    <property type="term" value="F:metal ion binding"/>
    <property type="evidence" value="ECO:0007669"/>
    <property type="project" value="UniProtKB-KW"/>
</dbReference>
<dbReference type="GO" id="GO:0009098">
    <property type="term" value="P:L-leucine biosynthetic process"/>
    <property type="evidence" value="ECO:0007669"/>
    <property type="project" value="UniProtKB-UniRule"/>
</dbReference>
<dbReference type="CDD" id="cd01583">
    <property type="entry name" value="IPMI"/>
    <property type="match status" value="1"/>
</dbReference>
<dbReference type="Gene3D" id="3.30.499.10">
    <property type="entry name" value="Aconitase, domain 3"/>
    <property type="match status" value="2"/>
</dbReference>
<dbReference type="HAMAP" id="MF_01027">
    <property type="entry name" value="LeuC_type2"/>
    <property type="match status" value="1"/>
</dbReference>
<dbReference type="InterPro" id="IPR015931">
    <property type="entry name" value="Acnase/IPM_dHydase_lsu_aba_1/3"/>
</dbReference>
<dbReference type="InterPro" id="IPR001030">
    <property type="entry name" value="Acoase/IPM_deHydtase_lsu_aba"/>
</dbReference>
<dbReference type="InterPro" id="IPR018136">
    <property type="entry name" value="Aconitase_4Fe-4S_BS"/>
</dbReference>
<dbReference type="InterPro" id="IPR036008">
    <property type="entry name" value="Aconitase_4Fe-4S_dom"/>
</dbReference>
<dbReference type="InterPro" id="IPR011826">
    <property type="entry name" value="HAcnase/IPMdehydase_lsu_prok"/>
</dbReference>
<dbReference type="InterPro" id="IPR006251">
    <property type="entry name" value="Homoacnase/IPMdehydase_lsu"/>
</dbReference>
<dbReference type="InterPro" id="IPR050067">
    <property type="entry name" value="IPM_dehydratase_rel_enz"/>
</dbReference>
<dbReference type="InterPro" id="IPR033941">
    <property type="entry name" value="IPMI_cat"/>
</dbReference>
<dbReference type="InterPro" id="IPR011823">
    <property type="entry name" value="IsopropMal_deHydtase_lsu_bac"/>
</dbReference>
<dbReference type="NCBIfam" id="TIGR01343">
    <property type="entry name" value="hacA_fam"/>
    <property type="match status" value="1"/>
</dbReference>
<dbReference type="NCBIfam" id="TIGR02086">
    <property type="entry name" value="IPMI_arch"/>
    <property type="match status" value="1"/>
</dbReference>
<dbReference type="NCBIfam" id="TIGR02083">
    <property type="entry name" value="LEU2"/>
    <property type="match status" value="1"/>
</dbReference>
<dbReference type="NCBIfam" id="NF001614">
    <property type="entry name" value="PRK00402.1"/>
    <property type="match status" value="1"/>
</dbReference>
<dbReference type="PANTHER" id="PTHR43822:SF16">
    <property type="entry name" value="3-ISOPROPYLMALATE DEHYDRATASE LARGE SUBUNIT 2"/>
    <property type="match status" value="1"/>
</dbReference>
<dbReference type="PANTHER" id="PTHR43822">
    <property type="entry name" value="HOMOACONITASE, MITOCHONDRIAL-RELATED"/>
    <property type="match status" value="1"/>
</dbReference>
<dbReference type="Pfam" id="PF00330">
    <property type="entry name" value="Aconitase"/>
    <property type="match status" value="1"/>
</dbReference>
<dbReference type="PRINTS" id="PR00415">
    <property type="entry name" value="ACONITASE"/>
</dbReference>
<dbReference type="SUPFAM" id="SSF53732">
    <property type="entry name" value="Aconitase iron-sulfur domain"/>
    <property type="match status" value="1"/>
</dbReference>
<dbReference type="PROSITE" id="PS00450">
    <property type="entry name" value="ACONITASE_1"/>
    <property type="match status" value="1"/>
</dbReference>
<dbReference type="PROSITE" id="PS01244">
    <property type="entry name" value="ACONITASE_2"/>
    <property type="match status" value="1"/>
</dbReference>
<organism>
    <name type="scientific">Nautilia profundicola (strain ATCC BAA-1463 / DSM 18972 / AmH)</name>
    <dbReference type="NCBI Taxonomy" id="598659"/>
    <lineage>
        <taxon>Bacteria</taxon>
        <taxon>Pseudomonadati</taxon>
        <taxon>Campylobacterota</taxon>
        <taxon>Epsilonproteobacteria</taxon>
        <taxon>Nautiliales</taxon>
        <taxon>Nautiliaceae</taxon>
        <taxon>Nautilia</taxon>
    </lineage>
</organism>
<evidence type="ECO:0000255" key="1">
    <source>
        <dbReference type="HAMAP-Rule" id="MF_01027"/>
    </source>
</evidence>
<name>LEUC_NAUPA</name>
<gene>
    <name evidence="1" type="primary">leuC</name>
    <name type="ordered locus">NAMH_1751</name>
</gene>
<protein>
    <recommendedName>
        <fullName evidence="1">3-isopropylmalate dehydratase large subunit</fullName>
        <ecNumber evidence="1">4.2.1.33</ecNumber>
    </recommendedName>
    <alternativeName>
        <fullName evidence="1">Alpha-IPM isomerase</fullName>
        <shortName evidence="1">IPMI</shortName>
    </alternativeName>
    <alternativeName>
        <fullName evidence="1">Isopropylmalate isomerase</fullName>
    </alternativeName>
</protein>
<proteinExistence type="inferred from homology"/>
<accession>B9L6Y8</accession>